<name>RS3A_CANDC</name>
<keyword id="KW-0007">Acetylation</keyword>
<keyword id="KW-0963">Cytoplasm</keyword>
<keyword id="KW-0687">Ribonucleoprotein</keyword>
<keyword id="KW-0689">Ribosomal protein</keyword>
<organism>
    <name type="scientific">Candida dubliniensis (strain CD36 / ATCC MYA-646 / CBS 7987 / NCPF 3949 / NRRL Y-17841)</name>
    <name type="common">Yeast</name>
    <dbReference type="NCBI Taxonomy" id="573826"/>
    <lineage>
        <taxon>Eukaryota</taxon>
        <taxon>Fungi</taxon>
        <taxon>Dikarya</taxon>
        <taxon>Ascomycota</taxon>
        <taxon>Saccharomycotina</taxon>
        <taxon>Pichiomycetes</taxon>
        <taxon>Debaryomycetaceae</taxon>
        <taxon>Candida/Lodderomyces clade</taxon>
        <taxon>Candida</taxon>
    </lineage>
</organism>
<protein>
    <recommendedName>
        <fullName evidence="1">Small ribosomal subunit protein eS1</fullName>
    </recommendedName>
    <alternativeName>
        <fullName evidence="2">40S ribosomal protein S1</fullName>
    </alternativeName>
</protein>
<proteinExistence type="inferred from homology"/>
<dbReference type="EMBL" id="FM992688">
    <property type="protein sequence ID" value="CAX44549.1"/>
    <property type="molecule type" value="Genomic_DNA"/>
</dbReference>
<dbReference type="RefSeq" id="XP_002416961.1">
    <property type="nucleotide sequence ID" value="XM_002416916.1"/>
</dbReference>
<dbReference type="SMR" id="B9W790"/>
<dbReference type="GeneID" id="8044497"/>
<dbReference type="KEGG" id="cdu:CD36_02890"/>
<dbReference type="CGD" id="CAL0000161338">
    <property type="gene designation" value="Cd36_02890"/>
</dbReference>
<dbReference type="VEuPathDB" id="FungiDB:CD36_02890"/>
<dbReference type="eggNOG" id="KOG1628">
    <property type="taxonomic scope" value="Eukaryota"/>
</dbReference>
<dbReference type="HOGENOM" id="CLU_062507_0_0_1"/>
<dbReference type="OrthoDB" id="9834376at2759"/>
<dbReference type="Proteomes" id="UP000002605">
    <property type="component" value="Chromosome 1"/>
</dbReference>
<dbReference type="GO" id="GO:0022627">
    <property type="term" value="C:cytosolic small ribosomal subunit"/>
    <property type="evidence" value="ECO:0007669"/>
    <property type="project" value="UniProtKB-UniRule"/>
</dbReference>
<dbReference type="GO" id="GO:0003735">
    <property type="term" value="F:structural constituent of ribosome"/>
    <property type="evidence" value="ECO:0007669"/>
    <property type="project" value="UniProtKB-UniRule"/>
</dbReference>
<dbReference type="GO" id="GO:0006412">
    <property type="term" value="P:translation"/>
    <property type="evidence" value="ECO:0007669"/>
    <property type="project" value="UniProtKB-UniRule"/>
</dbReference>
<dbReference type="HAMAP" id="MF_03122">
    <property type="entry name" value="Ribosomal_eS1_euk"/>
    <property type="match status" value="1"/>
</dbReference>
<dbReference type="InterPro" id="IPR001593">
    <property type="entry name" value="Ribosomal_eS1"/>
</dbReference>
<dbReference type="InterPro" id="IPR018281">
    <property type="entry name" value="Ribosomal_eS1_CS"/>
</dbReference>
<dbReference type="InterPro" id="IPR027500">
    <property type="entry name" value="Ribosomal_eS1_euk"/>
</dbReference>
<dbReference type="PANTHER" id="PTHR11830">
    <property type="entry name" value="40S RIBOSOMAL PROTEIN S3A"/>
    <property type="match status" value="1"/>
</dbReference>
<dbReference type="Pfam" id="PF01015">
    <property type="entry name" value="Ribosomal_S3Ae"/>
    <property type="match status" value="1"/>
</dbReference>
<dbReference type="SMART" id="SM01397">
    <property type="entry name" value="Ribosomal_S3Ae"/>
    <property type="match status" value="1"/>
</dbReference>
<dbReference type="PROSITE" id="PS01191">
    <property type="entry name" value="RIBOSOMAL_S3AE"/>
    <property type="match status" value="1"/>
</dbReference>
<feature type="initiator methionine" description="Removed" evidence="1">
    <location>
        <position position="1"/>
    </location>
</feature>
<feature type="chain" id="PRO_0000389364" description="Small ribosomal subunit protein eS1">
    <location>
        <begin position="2"/>
        <end position="256"/>
    </location>
</feature>
<feature type="modified residue" description="N-acetylalanine; partial" evidence="1">
    <location>
        <position position="2"/>
    </location>
</feature>
<gene>
    <name evidence="1" type="primary">RPS1</name>
    <name type="ORF">CD36_02890</name>
</gene>
<accession>B9W790</accession>
<comment type="subunit">
    <text evidence="1">Component of the small ribosomal subunit. Mature ribosomes consist of a small (40S) and a large (60S) subunit. The 40S subunit contains about 33 different proteins and 1 molecule of RNA (18S). The 60S subunit contains about 49 different proteins and 3 molecules of RNA (25S, 5.8S and 5S).</text>
</comment>
<comment type="subcellular location">
    <subcellularLocation>
        <location evidence="1">Cytoplasm</location>
    </subcellularLocation>
</comment>
<comment type="similarity">
    <text evidence="1">Belongs to the eukaryotic ribosomal protein eS1 family.</text>
</comment>
<evidence type="ECO:0000255" key="1">
    <source>
        <dbReference type="HAMAP-Rule" id="MF_03122"/>
    </source>
</evidence>
<evidence type="ECO:0000305" key="2"/>
<sequence>MAVGKNKRLSKGKKGLKKKVVDPFTRKDWFDIKAPTTFENRNVGKTLINRSTGLKNAADGLKGRVFEVCLADLQGSEDHSYRKIKLRVDEVQGKNLLTNFHGLDFTSDKLRSLVRKWQSLVEANVTVKTSDDYVLRVFAIAFTKRQPNQIKKTTYAQSSKLREVRKKMIEIMQREVSNCTLAQLTSKLIPEVIGREIEKSTQTIFPLQNVHIRKVKLLKQPKFDLGSLLALHGEGSTEEKGKKVSSGFKDVVLESV</sequence>
<reference key="1">
    <citation type="journal article" date="2009" name="Genome Res.">
        <title>Comparative genomics of the fungal pathogens Candida dubliniensis and Candida albicans.</title>
        <authorList>
            <person name="Jackson A.P."/>
            <person name="Gamble J.A."/>
            <person name="Yeomans T."/>
            <person name="Moran G.P."/>
            <person name="Saunders D."/>
            <person name="Harris D."/>
            <person name="Aslett M."/>
            <person name="Barrell J.F."/>
            <person name="Butler G."/>
            <person name="Citiulo F."/>
            <person name="Coleman D.C."/>
            <person name="de Groot P.W.J."/>
            <person name="Goodwin T.J."/>
            <person name="Quail M.A."/>
            <person name="McQuillan J."/>
            <person name="Munro C.A."/>
            <person name="Pain A."/>
            <person name="Poulter R.T."/>
            <person name="Rajandream M.A."/>
            <person name="Renauld H."/>
            <person name="Spiering M.J."/>
            <person name="Tivey A."/>
            <person name="Gow N.A.R."/>
            <person name="Barrell B."/>
            <person name="Sullivan D.J."/>
            <person name="Berriman M."/>
        </authorList>
    </citation>
    <scope>NUCLEOTIDE SEQUENCE [LARGE SCALE GENOMIC DNA]</scope>
    <source>
        <strain>CD36 / ATCC MYA-646 / CBS 7987 / NCPF 3949 / NRRL Y-17841</strain>
    </source>
</reference>